<organism>
    <name type="scientific">Staphylococcus aureus (strain N315)</name>
    <dbReference type="NCBI Taxonomy" id="158879"/>
    <lineage>
        <taxon>Bacteria</taxon>
        <taxon>Bacillati</taxon>
        <taxon>Bacillota</taxon>
        <taxon>Bacilli</taxon>
        <taxon>Bacillales</taxon>
        <taxon>Staphylococcaceae</taxon>
        <taxon>Staphylococcus</taxon>
    </lineage>
</organism>
<gene>
    <name type="primary">ccpA</name>
    <name type="ordered locus">SA1557</name>
</gene>
<proteinExistence type="evidence at protein level"/>
<reference key="1">
    <citation type="journal article" date="2001" name="Lancet">
        <title>Whole genome sequencing of meticillin-resistant Staphylococcus aureus.</title>
        <authorList>
            <person name="Kuroda M."/>
            <person name="Ohta T."/>
            <person name="Uchiyama I."/>
            <person name="Baba T."/>
            <person name="Yuzawa H."/>
            <person name="Kobayashi I."/>
            <person name="Cui L."/>
            <person name="Oguchi A."/>
            <person name="Aoki K."/>
            <person name="Nagai Y."/>
            <person name="Lian J.-Q."/>
            <person name="Ito T."/>
            <person name="Kanamori M."/>
            <person name="Matsumaru H."/>
            <person name="Maruyama A."/>
            <person name="Murakami H."/>
            <person name="Hosoyama A."/>
            <person name="Mizutani-Ui Y."/>
            <person name="Takahashi N.K."/>
            <person name="Sawano T."/>
            <person name="Inoue R."/>
            <person name="Kaito C."/>
            <person name="Sekimizu K."/>
            <person name="Hirakawa H."/>
            <person name="Kuhara S."/>
            <person name="Goto S."/>
            <person name="Yabuzaki J."/>
            <person name="Kanehisa M."/>
            <person name="Yamashita A."/>
            <person name="Oshima K."/>
            <person name="Furuya K."/>
            <person name="Yoshino C."/>
            <person name="Shiba T."/>
            <person name="Hattori M."/>
            <person name="Ogasawara N."/>
            <person name="Hayashi H."/>
            <person name="Hiramatsu K."/>
        </authorList>
    </citation>
    <scope>NUCLEOTIDE SEQUENCE [LARGE SCALE GENOMIC DNA]</scope>
    <source>
        <strain>N315</strain>
    </source>
</reference>
<reference key="2">
    <citation type="journal article" date="2005" name="J. Microbiol. Methods">
        <title>Correlation of proteomic and transcriptomic profiles of Staphylococcus aureus during the post-exponential phase of growth.</title>
        <authorList>
            <person name="Scherl A."/>
            <person name="Francois P."/>
            <person name="Bento M."/>
            <person name="Deshusses J.M."/>
            <person name="Charbonnier Y."/>
            <person name="Converset V."/>
            <person name="Huyghe A."/>
            <person name="Walter N."/>
            <person name="Hoogland C."/>
            <person name="Appel R.D."/>
            <person name="Sanchez J.-C."/>
            <person name="Zimmermann-Ivol C.G."/>
            <person name="Corthals G.L."/>
            <person name="Hochstrasser D.F."/>
            <person name="Schrenzel J."/>
        </authorList>
    </citation>
    <scope>IDENTIFICATION BY MASS SPECTROMETRY</scope>
    <source>
        <strain>N315</strain>
    </source>
</reference>
<reference key="3">
    <citation type="submission" date="2007-10" db="UniProtKB">
        <title>Shotgun proteomic analysis of total and membrane protein extracts of S. aureus strain N315.</title>
        <authorList>
            <person name="Vaezzadeh A.R."/>
            <person name="Deshusses J."/>
            <person name="Lescuyer P."/>
            <person name="Hochstrasser D.F."/>
        </authorList>
    </citation>
    <scope>IDENTIFICATION BY MASS SPECTROMETRY [LARGE SCALE ANALYSIS]</scope>
    <source>
        <strain>N315</strain>
    </source>
</reference>
<evidence type="ECO:0000250" key="1"/>
<evidence type="ECO:0000255" key="2">
    <source>
        <dbReference type="PROSITE-ProRule" id="PRU00111"/>
    </source>
</evidence>
<evidence type="ECO:0000305" key="3"/>
<evidence type="ECO:0007829" key="4">
    <source>
        <dbReference type="PDB" id="7E5W"/>
    </source>
</evidence>
<accession>P99175</accession>
<accession>Q99TC8</accession>
<protein>
    <recommendedName>
        <fullName>Catabolite control protein A</fullName>
    </recommendedName>
</protein>
<feature type="chain" id="PRO_0000107928" description="Catabolite control protein A">
    <location>
        <begin position="1"/>
        <end position="329"/>
    </location>
</feature>
<feature type="domain" description="HTH lacI-type" evidence="2">
    <location>
        <begin position="1"/>
        <end position="57"/>
    </location>
</feature>
<feature type="DNA-binding region" description="H-T-H motif" evidence="2">
    <location>
        <begin position="5"/>
        <end position="24"/>
    </location>
</feature>
<feature type="helix" evidence="4">
    <location>
        <begin position="5"/>
        <end position="12"/>
    </location>
</feature>
<feature type="helix" evidence="4">
    <location>
        <begin position="16"/>
        <end position="23"/>
    </location>
</feature>
<feature type="helix" evidence="4">
    <location>
        <begin position="31"/>
        <end position="43"/>
    </location>
</feature>
<feature type="strand" evidence="4">
    <location>
        <begin position="62"/>
        <end position="68"/>
    </location>
</feature>
<feature type="helix" evidence="4">
    <location>
        <begin position="73"/>
        <end position="88"/>
    </location>
</feature>
<feature type="strand" evidence="4">
    <location>
        <begin position="92"/>
        <end position="97"/>
    </location>
</feature>
<feature type="helix" evidence="4">
    <location>
        <begin position="102"/>
        <end position="114"/>
    </location>
</feature>
<feature type="strand" evidence="4">
    <location>
        <begin position="118"/>
        <end position="127"/>
    </location>
</feature>
<feature type="helix" evidence="4">
    <location>
        <begin position="129"/>
        <end position="137"/>
    </location>
</feature>
<feature type="strand" evidence="4">
    <location>
        <begin position="142"/>
        <end position="146"/>
    </location>
</feature>
<feature type="strand" evidence="4">
    <location>
        <begin position="148"/>
        <end position="150"/>
    </location>
</feature>
<feature type="strand" evidence="4">
    <location>
        <begin position="154"/>
        <end position="158"/>
    </location>
</feature>
<feature type="helix" evidence="4">
    <location>
        <begin position="161"/>
        <end position="174"/>
    </location>
</feature>
<feature type="strand" evidence="4">
    <location>
        <begin position="179"/>
        <end position="184"/>
    </location>
</feature>
<feature type="strand" evidence="4">
    <location>
        <begin position="186"/>
        <end position="188"/>
    </location>
</feature>
<feature type="helix" evidence="4">
    <location>
        <begin position="189"/>
        <end position="206"/>
    </location>
</feature>
<feature type="strand" evidence="4">
    <location>
        <begin position="209"/>
        <end position="215"/>
    </location>
</feature>
<feature type="helix" evidence="4">
    <location>
        <begin position="222"/>
        <end position="232"/>
    </location>
</feature>
<feature type="strand" evidence="4">
    <location>
        <begin position="233"/>
        <end position="235"/>
    </location>
</feature>
<feature type="strand" evidence="4">
    <location>
        <begin position="238"/>
        <end position="244"/>
    </location>
</feature>
<feature type="helix" evidence="4">
    <location>
        <begin position="245"/>
        <end position="257"/>
    </location>
</feature>
<feature type="turn" evidence="4">
    <location>
        <begin position="262"/>
        <end position="265"/>
    </location>
</feature>
<feature type="strand" evidence="4">
    <location>
        <begin position="267"/>
        <end position="272"/>
    </location>
</feature>
<feature type="helix" evidence="4">
    <location>
        <begin position="275"/>
        <end position="277"/>
    </location>
</feature>
<feature type="strand" evidence="4">
    <location>
        <begin position="279"/>
        <end position="282"/>
    </location>
</feature>
<feature type="strand" evidence="4">
    <location>
        <begin position="286"/>
        <end position="288"/>
    </location>
</feature>
<feature type="helix" evidence="4">
    <location>
        <begin position="291"/>
        <end position="306"/>
    </location>
</feature>
<feature type="strand" evidence="4">
    <location>
        <begin position="315"/>
        <end position="317"/>
    </location>
</feature>
<feature type="strand" evidence="4">
    <location>
        <begin position="321"/>
        <end position="323"/>
    </location>
</feature>
<name>CCPA_STAAN</name>
<keyword id="KW-0002">3D-structure</keyword>
<keyword id="KW-0010">Activator</keyword>
<keyword id="KW-0238">DNA-binding</keyword>
<keyword id="KW-0678">Repressor</keyword>
<keyword id="KW-0804">Transcription</keyword>
<keyword id="KW-0805">Transcription regulation</keyword>
<sequence length="329" mass="36060">MTVTIYDVAREARVSMATVSRVVNGNQNVKAETKNKVNEVIKRLNYRPNAVARGLASKKTTTVGVIIPDISNIYYSQLARGLEDIATMYKYHSIISNSDNDPEKEKEIFNNLLSKQVDGIIFLGGTITEEMKELINQSSVPVVVSGTNGKDAHIASVNIDFTEAAKEITGELIEKGAKSFALVGGEHSKKAQEDVLEGLTEVLNKNGLQLGDTLNCSGAESYKEGVKAFAKMKGNLPDAILCISDEEAIGIMHSAMDAGIKVPEELQIISFNNTRLVEMVRPQLSSVIQPLYDIGAVGMRLLTKYMNDEKIEEPNVVLPHRIEYRGTTK</sequence>
<dbReference type="EMBL" id="BA000018">
    <property type="protein sequence ID" value="BAB42825.1"/>
    <property type="status" value="ALT_INIT"/>
    <property type="molecule type" value="Genomic_DNA"/>
</dbReference>
<dbReference type="PIR" id="D89958">
    <property type="entry name" value="D89958"/>
</dbReference>
<dbReference type="RefSeq" id="WP_000219066.1">
    <property type="nucleotide sequence ID" value="NC_002745.2"/>
</dbReference>
<dbReference type="PDB" id="7E5W">
    <property type="method" value="X-ray"/>
    <property type="resolution" value="2.55 A"/>
    <property type="chains" value="A/B/C=1-329"/>
</dbReference>
<dbReference type="PDBsum" id="7E5W"/>
<dbReference type="SMR" id="P99175"/>
<dbReference type="EnsemblBacteria" id="BAB42825">
    <property type="protein sequence ID" value="BAB42825"/>
    <property type="gene ID" value="BAB42825"/>
</dbReference>
<dbReference type="KEGG" id="sau:SA1557"/>
<dbReference type="HOGENOM" id="CLU_037628_6_0_9"/>
<dbReference type="PHI-base" id="PHI:11270"/>
<dbReference type="GO" id="GO:0003700">
    <property type="term" value="F:DNA-binding transcription factor activity"/>
    <property type="evidence" value="ECO:0007669"/>
    <property type="project" value="TreeGrafter"/>
</dbReference>
<dbReference type="GO" id="GO:0000976">
    <property type="term" value="F:transcription cis-regulatory region binding"/>
    <property type="evidence" value="ECO:0007669"/>
    <property type="project" value="TreeGrafter"/>
</dbReference>
<dbReference type="CDD" id="cd01392">
    <property type="entry name" value="HTH_LacI"/>
    <property type="match status" value="1"/>
</dbReference>
<dbReference type="FunFam" id="1.10.260.40:FF:000002">
    <property type="entry name" value="HTH-type transcriptional repressor PurR"/>
    <property type="match status" value="1"/>
</dbReference>
<dbReference type="Gene3D" id="3.40.50.2300">
    <property type="match status" value="2"/>
</dbReference>
<dbReference type="Gene3D" id="1.10.260.40">
    <property type="entry name" value="lambda repressor-like DNA-binding domains"/>
    <property type="match status" value="1"/>
</dbReference>
<dbReference type="InterPro" id="IPR006377">
    <property type="entry name" value="CcpA"/>
</dbReference>
<dbReference type="InterPro" id="IPR000843">
    <property type="entry name" value="HTH_LacI"/>
</dbReference>
<dbReference type="InterPro" id="IPR046335">
    <property type="entry name" value="LacI/GalR-like_sensor"/>
</dbReference>
<dbReference type="InterPro" id="IPR010982">
    <property type="entry name" value="Lambda_DNA-bd_dom_sf"/>
</dbReference>
<dbReference type="InterPro" id="IPR028082">
    <property type="entry name" value="Peripla_BP_I"/>
</dbReference>
<dbReference type="NCBIfam" id="TIGR01481">
    <property type="entry name" value="ccpA"/>
    <property type="match status" value="1"/>
</dbReference>
<dbReference type="PANTHER" id="PTHR30146:SF150">
    <property type="entry name" value="ARABINOSE METABOLISM TRANSCRIPTIONAL REPRESSOR"/>
    <property type="match status" value="1"/>
</dbReference>
<dbReference type="PANTHER" id="PTHR30146">
    <property type="entry name" value="LACI-RELATED TRANSCRIPTIONAL REPRESSOR"/>
    <property type="match status" value="1"/>
</dbReference>
<dbReference type="Pfam" id="PF00356">
    <property type="entry name" value="LacI"/>
    <property type="match status" value="1"/>
</dbReference>
<dbReference type="Pfam" id="PF13377">
    <property type="entry name" value="Peripla_BP_3"/>
    <property type="match status" value="1"/>
</dbReference>
<dbReference type="PRINTS" id="PR00036">
    <property type="entry name" value="HTHLACI"/>
</dbReference>
<dbReference type="SMART" id="SM00354">
    <property type="entry name" value="HTH_LACI"/>
    <property type="match status" value="1"/>
</dbReference>
<dbReference type="SUPFAM" id="SSF47413">
    <property type="entry name" value="lambda repressor-like DNA-binding domains"/>
    <property type="match status" value="1"/>
</dbReference>
<dbReference type="SUPFAM" id="SSF53822">
    <property type="entry name" value="Periplasmic binding protein-like I"/>
    <property type="match status" value="1"/>
</dbReference>
<dbReference type="PROSITE" id="PS00356">
    <property type="entry name" value="HTH_LACI_1"/>
    <property type="match status" value="1"/>
</dbReference>
<dbReference type="PROSITE" id="PS50932">
    <property type="entry name" value="HTH_LACI_2"/>
    <property type="match status" value="1"/>
</dbReference>
<comment type="function">
    <text evidence="1">Global transcriptional regulator of carbon catabolite repression (CCR) and carbon catabolite activation (CCA), which ensures optimal energy usage under diverse conditions.</text>
</comment>
<comment type="sequence caution" evidence="3">
    <conflict type="erroneous initiation">
        <sequence resource="EMBL-CDS" id="BAB42825"/>
    </conflict>
    <text>Truncated N-terminus.</text>
</comment>